<sequence>MNTATRVIVAQNVRTRNRTFQITKQGVVIVALVIALLCSAFGVVYFKDLNRRLFIQYQTLQREKAEELIQWGKLLLEQTTWSTQSRVQRIAEQQLGMQLPSAKEVILVNADAMIE</sequence>
<feature type="chain" id="PRO_0000414556" description="Cell division protein FtsL">
    <location>
        <begin position="1"/>
        <end position="115"/>
    </location>
</feature>
<feature type="topological domain" description="Cytoplasmic" evidence="1">
    <location>
        <begin position="1"/>
        <end position="25"/>
    </location>
</feature>
<feature type="transmembrane region" description="Helical" evidence="1">
    <location>
        <begin position="26"/>
        <end position="46"/>
    </location>
</feature>
<feature type="topological domain" description="Periplasmic" evidence="1">
    <location>
        <begin position="47"/>
        <end position="115"/>
    </location>
</feature>
<accession>Q83F34</accession>
<comment type="function">
    <text evidence="1">Essential cell division protein. May link together the upstream cell division proteins, which are predominantly cytoplasmic, with the downstream cell division proteins, which are predominantly periplasmic.</text>
</comment>
<comment type="subunit">
    <text evidence="1">Part of a complex composed of FtsB, FtsL and FtsQ.</text>
</comment>
<comment type="subcellular location">
    <subcellularLocation>
        <location evidence="1">Cell inner membrane</location>
        <topology evidence="1">Single-pass type II membrane protein</topology>
    </subcellularLocation>
    <text evidence="1">Localizes to the division septum where it forms a ring structure.</text>
</comment>
<comment type="similarity">
    <text evidence="1">Belongs to the FtsL family.</text>
</comment>
<keyword id="KW-0131">Cell cycle</keyword>
<keyword id="KW-0132">Cell division</keyword>
<keyword id="KW-0997">Cell inner membrane</keyword>
<keyword id="KW-1003">Cell membrane</keyword>
<keyword id="KW-0472">Membrane</keyword>
<keyword id="KW-1185">Reference proteome</keyword>
<keyword id="KW-0812">Transmembrane</keyword>
<keyword id="KW-1133">Transmembrane helix</keyword>
<protein>
    <recommendedName>
        <fullName evidence="1">Cell division protein FtsL</fullName>
    </recommendedName>
</protein>
<gene>
    <name evidence="1" type="primary">ftsL</name>
    <name type="ordered locus">CBU_0117</name>
</gene>
<reference key="1">
    <citation type="journal article" date="2003" name="Proc. Natl. Acad. Sci. U.S.A.">
        <title>Complete genome sequence of the Q-fever pathogen, Coxiella burnetii.</title>
        <authorList>
            <person name="Seshadri R."/>
            <person name="Paulsen I.T."/>
            <person name="Eisen J.A."/>
            <person name="Read T.D."/>
            <person name="Nelson K.E."/>
            <person name="Nelson W.C."/>
            <person name="Ward N.L."/>
            <person name="Tettelin H."/>
            <person name="Davidsen T.M."/>
            <person name="Beanan M.J."/>
            <person name="DeBoy R.T."/>
            <person name="Daugherty S.C."/>
            <person name="Brinkac L.M."/>
            <person name="Madupu R."/>
            <person name="Dodson R.J."/>
            <person name="Khouri H.M."/>
            <person name="Lee K.H."/>
            <person name="Carty H.A."/>
            <person name="Scanlan D."/>
            <person name="Heinzen R.A."/>
            <person name="Thompson H.A."/>
            <person name="Samuel J.E."/>
            <person name="Fraser C.M."/>
            <person name="Heidelberg J.F."/>
        </authorList>
    </citation>
    <scope>NUCLEOTIDE SEQUENCE [LARGE SCALE GENOMIC DNA]</scope>
    <source>
        <strain>RSA 493 / Nine Mile phase I</strain>
    </source>
</reference>
<organism>
    <name type="scientific">Coxiella burnetii (strain RSA 493 / Nine Mile phase I)</name>
    <dbReference type="NCBI Taxonomy" id="227377"/>
    <lineage>
        <taxon>Bacteria</taxon>
        <taxon>Pseudomonadati</taxon>
        <taxon>Pseudomonadota</taxon>
        <taxon>Gammaproteobacteria</taxon>
        <taxon>Legionellales</taxon>
        <taxon>Coxiellaceae</taxon>
        <taxon>Coxiella</taxon>
    </lineage>
</organism>
<evidence type="ECO:0000255" key="1">
    <source>
        <dbReference type="HAMAP-Rule" id="MF_00910"/>
    </source>
</evidence>
<proteinExistence type="inferred from homology"/>
<name>FTSL_COXBU</name>
<dbReference type="EMBL" id="AE016828">
    <property type="protein sequence ID" value="AAO89681.1"/>
    <property type="molecule type" value="Genomic_DNA"/>
</dbReference>
<dbReference type="RefSeq" id="NP_819167.1">
    <property type="nucleotide sequence ID" value="NC_002971.4"/>
</dbReference>
<dbReference type="RefSeq" id="WP_005769447.1">
    <property type="nucleotide sequence ID" value="NZ_CDBG01000001.1"/>
</dbReference>
<dbReference type="SMR" id="Q83F34"/>
<dbReference type="STRING" id="227377.CBU_0117"/>
<dbReference type="EnsemblBacteria" id="AAO89681">
    <property type="protein sequence ID" value="AAO89681"/>
    <property type="gene ID" value="CBU_0117"/>
</dbReference>
<dbReference type="GeneID" id="1207988"/>
<dbReference type="KEGG" id="cbu:CBU_0117"/>
<dbReference type="PATRIC" id="fig|227377.7.peg.120"/>
<dbReference type="eggNOG" id="COG3116">
    <property type="taxonomic scope" value="Bacteria"/>
</dbReference>
<dbReference type="HOGENOM" id="CLU_156524_1_3_6"/>
<dbReference type="OrthoDB" id="5298556at2"/>
<dbReference type="Proteomes" id="UP000002671">
    <property type="component" value="Chromosome"/>
</dbReference>
<dbReference type="GO" id="GO:0032153">
    <property type="term" value="C:cell division site"/>
    <property type="evidence" value="ECO:0000318"/>
    <property type="project" value="GO_Central"/>
</dbReference>
<dbReference type="GO" id="GO:0005886">
    <property type="term" value="C:plasma membrane"/>
    <property type="evidence" value="ECO:0000318"/>
    <property type="project" value="GO_Central"/>
</dbReference>
<dbReference type="GO" id="GO:0043093">
    <property type="term" value="P:FtsZ-dependent cytokinesis"/>
    <property type="evidence" value="ECO:0000318"/>
    <property type="project" value="GO_Central"/>
</dbReference>
<dbReference type="HAMAP" id="MF_00910">
    <property type="entry name" value="FtsL"/>
    <property type="match status" value="1"/>
</dbReference>
<dbReference type="InterPro" id="IPR011922">
    <property type="entry name" value="Cell_div_FtsL"/>
</dbReference>
<dbReference type="NCBIfam" id="TIGR02209">
    <property type="entry name" value="ftsL_broad"/>
    <property type="match status" value="1"/>
</dbReference>
<dbReference type="PANTHER" id="PTHR37479">
    <property type="entry name" value="CELL DIVISION PROTEIN FTSL"/>
    <property type="match status" value="1"/>
</dbReference>
<dbReference type="PANTHER" id="PTHR37479:SF1">
    <property type="entry name" value="CELL DIVISION PROTEIN FTSL"/>
    <property type="match status" value="1"/>
</dbReference>
<dbReference type="Pfam" id="PF04999">
    <property type="entry name" value="FtsL"/>
    <property type="match status" value="1"/>
</dbReference>